<feature type="chain" id="PRO_0000208939" description="Methylamine utilization protein MauF">
    <location>
        <begin position="1"/>
        <end position="285"/>
    </location>
</feature>
<feature type="transmembrane region" description="Helical" evidence="1">
    <location>
        <begin position="39"/>
        <end position="59"/>
    </location>
</feature>
<feature type="transmembrane region" description="Helical" evidence="1">
    <location>
        <begin position="60"/>
        <end position="80"/>
    </location>
</feature>
<feature type="transmembrane region" description="Helical" evidence="1">
    <location>
        <begin position="119"/>
        <end position="139"/>
    </location>
</feature>
<feature type="transmembrane region" description="Helical" evidence="1">
    <location>
        <begin position="145"/>
        <end position="165"/>
    </location>
</feature>
<feature type="transmembrane region" description="Helical" evidence="1">
    <location>
        <begin position="188"/>
        <end position="208"/>
    </location>
</feature>
<feature type="transmembrane region" description="Helical" evidence="1">
    <location>
        <begin position="212"/>
        <end position="232"/>
    </location>
</feature>
<feature type="transmembrane region" description="Helical" evidence="1">
    <location>
        <begin position="265"/>
        <end position="285"/>
    </location>
</feature>
<protein>
    <recommendedName>
        <fullName>Methylamine utilization protein MauF</fullName>
    </recommendedName>
</protein>
<dbReference type="EMBL" id="L26407">
    <property type="protein sequence ID" value="AAB46947.1"/>
    <property type="molecule type" value="Genomic_DNA"/>
</dbReference>
<dbReference type="PIR" id="T10069">
    <property type="entry name" value="T10069"/>
</dbReference>
<dbReference type="STRING" id="1122236.GCA_000378225_02093"/>
<dbReference type="UniPathway" id="UPA00895"/>
<dbReference type="GO" id="GO:0005886">
    <property type="term" value="C:plasma membrane"/>
    <property type="evidence" value="ECO:0007669"/>
    <property type="project" value="UniProtKB-SubCell"/>
</dbReference>
<proteinExistence type="predicted"/>
<organism>
    <name type="scientific">Methylophilus methylotrophus</name>
    <name type="common">Bacterium W3A1</name>
    <dbReference type="NCBI Taxonomy" id="17"/>
    <lineage>
        <taxon>Bacteria</taxon>
        <taxon>Pseudomonadati</taxon>
        <taxon>Pseudomonadota</taxon>
        <taxon>Betaproteobacteria</taxon>
        <taxon>Nitrosomonadales</taxon>
        <taxon>Methylophilaceae</taxon>
        <taxon>Methylophilus</taxon>
    </lineage>
</organism>
<sequence>MSMNIGATAMSRSSQAYAVETCVPDAYHFSKAQSTGTRFIMMLTAVASGVFAGRVMHSTMSVEMALTGLFVVLAFVGGLLSTWSPCGYSSLSLLRPAGRYSLGAVTRWAPTFFTHAVGYAIGAVVLGGALGGISWLLFADVPLQYAVIGLATLAIGYGLHQFGFLKMPYPQRRAQVPHDARFRFRSSVIGLLYGFSLGMNYLTYVQTPMLYIVTGVALLSGGVKAGIAVIAVFNIGRCLPVAVNFLPVKDQSVQAWLARWQESAVEVDGFLLLAIASAALMLVML</sequence>
<keyword id="KW-1003">Cell membrane</keyword>
<keyword id="KW-0472">Membrane</keyword>
<keyword id="KW-0812">Transmembrane</keyword>
<keyword id="KW-1133">Transmembrane helix</keyword>
<comment type="pathway">
    <text>One-carbon metabolism; methylamine degradation.</text>
</comment>
<comment type="subcellular location">
    <subcellularLocation>
        <location evidence="2">Cell membrane</location>
        <topology evidence="2">Multi-pass membrane protein</topology>
    </subcellularLocation>
</comment>
<gene>
    <name type="primary">mauF</name>
</gene>
<evidence type="ECO:0000255" key="1"/>
<evidence type="ECO:0000305" key="2"/>
<name>MAUF_METME</name>
<accession>Q50230</accession>
<reference key="1">
    <citation type="journal article" date="1994" name="J. Bacteriol.">
        <title>Organization of the methylamine utilization (mau) genes in Methylophilus methylotrophus W3A1-NS.</title>
        <authorList>
            <person name="Chistoserdov A.Y."/>
            <person name="McIntire W.S."/>
            <person name="Mathews F.S."/>
            <person name="Lidstrom M.E."/>
        </authorList>
    </citation>
    <scope>NUCLEOTIDE SEQUENCE [GENOMIC DNA]</scope>
</reference>